<name>HSP17_CAEEL</name>
<dbReference type="EMBL" id="K03273">
    <property type="protein sequence ID" value="AAA28067.1"/>
    <property type="molecule type" value="Genomic_DNA"/>
</dbReference>
<dbReference type="EMBL" id="K03273">
    <property type="protein sequence ID" value="AAA28069.1"/>
    <property type="molecule type" value="Genomic_DNA"/>
</dbReference>
<dbReference type="EMBL" id="FO080670">
    <property type="protein sequence ID" value="CCD65663.1"/>
    <property type="molecule type" value="Genomic_DNA"/>
</dbReference>
<dbReference type="EMBL" id="FO080670">
    <property type="protein sequence ID" value="CCD65669.1"/>
    <property type="molecule type" value="Genomic_DNA"/>
</dbReference>
<dbReference type="EMBL" id="X01576">
    <property type="protein sequence ID" value="CAA25731.1"/>
    <property type="molecule type" value="mRNA"/>
</dbReference>
<dbReference type="PIR" id="A24289">
    <property type="entry name" value="HHKW48"/>
</dbReference>
<dbReference type="RefSeq" id="NP_505355.1">
    <property type="nucleotide sequence ID" value="NM_072954.5"/>
</dbReference>
<dbReference type="RefSeq" id="NP_505356.1">
    <property type="nucleotide sequence ID" value="NM_072955.3"/>
</dbReference>
<dbReference type="SMR" id="P02513"/>
<dbReference type="BioGRID" id="44325">
    <property type="interactions" value="3"/>
</dbReference>
<dbReference type="BioGRID" id="44326">
    <property type="interactions" value="7"/>
</dbReference>
<dbReference type="FunCoup" id="P02513">
    <property type="interactions" value="6"/>
</dbReference>
<dbReference type="STRING" id="6239.T27E4.3.1"/>
<dbReference type="PaxDb" id="6239-T27E4.3"/>
<dbReference type="PeptideAtlas" id="P02513"/>
<dbReference type="EnsemblMetazoa" id="T27E4.3.1">
    <property type="protein sequence ID" value="T27E4.3.1"/>
    <property type="gene ID" value="WBGene00002019"/>
</dbReference>
<dbReference type="EnsemblMetazoa" id="T27E4.9.1">
    <property type="protein sequence ID" value="T27E4.9.1"/>
    <property type="gene ID" value="WBGene00002020"/>
</dbReference>
<dbReference type="GeneID" id="179287"/>
<dbReference type="GeneID" id="179288"/>
<dbReference type="KEGG" id="cel:CELE_T27E4.3"/>
<dbReference type="KEGG" id="cel:CELE_T27E4.9"/>
<dbReference type="UCSC" id="T27E4.3">
    <property type="organism name" value="c. elegans"/>
</dbReference>
<dbReference type="AGR" id="WB:WBGene00002019"/>
<dbReference type="AGR" id="WB:WBGene00002020"/>
<dbReference type="CTD" id="179287"/>
<dbReference type="CTD" id="179288"/>
<dbReference type="WormBase" id="T27E4.3">
    <property type="protein sequence ID" value="CE14251"/>
    <property type="gene ID" value="WBGene00002019"/>
    <property type="gene designation" value="hsp-16.48"/>
</dbReference>
<dbReference type="WormBase" id="T27E4.9">
    <property type="protein sequence ID" value="CE14251"/>
    <property type="gene ID" value="WBGene00002020"/>
    <property type="gene designation" value="hsp-16.49"/>
</dbReference>
<dbReference type="eggNOG" id="KOG3591">
    <property type="taxonomic scope" value="Eukaryota"/>
</dbReference>
<dbReference type="GeneTree" id="ENSGT00970000196196"/>
<dbReference type="HOGENOM" id="CLU_095001_4_1_1"/>
<dbReference type="InParanoid" id="P02513"/>
<dbReference type="OMA" id="AMSVYEP"/>
<dbReference type="OrthoDB" id="1431247at2759"/>
<dbReference type="PhylomeDB" id="P02513"/>
<dbReference type="Reactome" id="R-CEL-4420097">
    <property type="pathway name" value="VEGFA-VEGFR2 Pathway"/>
</dbReference>
<dbReference type="PRO" id="PR:P02513"/>
<dbReference type="Proteomes" id="UP000001940">
    <property type="component" value="Chromosome V"/>
</dbReference>
<dbReference type="Bgee" id="WBGene00002019">
    <property type="expression patterns" value="Expressed in pharyngeal muscle cell (C elegans) and 3 other cell types or tissues"/>
</dbReference>
<dbReference type="GO" id="GO:0005737">
    <property type="term" value="C:cytoplasm"/>
    <property type="evidence" value="ECO:0000318"/>
    <property type="project" value="GO_Central"/>
</dbReference>
<dbReference type="GO" id="GO:0005634">
    <property type="term" value="C:nucleus"/>
    <property type="evidence" value="ECO:0000318"/>
    <property type="project" value="GO_Central"/>
</dbReference>
<dbReference type="GO" id="GO:0051082">
    <property type="term" value="F:unfolded protein binding"/>
    <property type="evidence" value="ECO:0000250"/>
    <property type="project" value="WormBase"/>
</dbReference>
<dbReference type="GO" id="GO:0008340">
    <property type="term" value="P:determination of adult lifespan"/>
    <property type="evidence" value="ECO:0000316"/>
    <property type="project" value="WormBase"/>
</dbReference>
<dbReference type="GO" id="GO:0030968">
    <property type="term" value="P:endoplasmic reticulum unfolded protein response"/>
    <property type="evidence" value="ECO:0000270"/>
    <property type="project" value="WormBase"/>
</dbReference>
<dbReference type="GO" id="GO:0036498">
    <property type="term" value="P:IRE1-mediated unfolded protein response"/>
    <property type="evidence" value="ECO:0007007"/>
    <property type="project" value="WormBase"/>
</dbReference>
<dbReference type="GO" id="GO:0042026">
    <property type="term" value="P:protein refolding"/>
    <property type="evidence" value="ECO:0000318"/>
    <property type="project" value="GO_Central"/>
</dbReference>
<dbReference type="GO" id="GO:0009408">
    <property type="term" value="P:response to heat"/>
    <property type="evidence" value="ECO:0000270"/>
    <property type="project" value="WormBase"/>
</dbReference>
<dbReference type="CDD" id="cd06526">
    <property type="entry name" value="metazoan_ACD"/>
    <property type="match status" value="1"/>
</dbReference>
<dbReference type="FunFam" id="2.60.40.790:FF:000094">
    <property type="entry name" value="Heat shock protein Hsp-16.2"/>
    <property type="match status" value="1"/>
</dbReference>
<dbReference type="Gene3D" id="2.60.40.790">
    <property type="match status" value="1"/>
</dbReference>
<dbReference type="InterPro" id="IPR002068">
    <property type="entry name" value="A-crystallin/Hsp20_dom"/>
</dbReference>
<dbReference type="InterPro" id="IPR001436">
    <property type="entry name" value="Alpha-crystallin/sHSP_animal"/>
</dbReference>
<dbReference type="InterPro" id="IPR008978">
    <property type="entry name" value="HSP20-like_chaperone"/>
</dbReference>
<dbReference type="PANTHER" id="PTHR45640">
    <property type="entry name" value="HEAT SHOCK PROTEIN HSP-12.2-RELATED"/>
    <property type="match status" value="1"/>
</dbReference>
<dbReference type="PANTHER" id="PTHR45640:SF21">
    <property type="entry name" value="HEAT SHOCK PROTEIN HSP-16.41-RELATED"/>
    <property type="match status" value="1"/>
</dbReference>
<dbReference type="Pfam" id="PF00011">
    <property type="entry name" value="HSP20"/>
    <property type="match status" value="1"/>
</dbReference>
<dbReference type="PRINTS" id="PR00299">
    <property type="entry name" value="ACRYSTALLIN"/>
</dbReference>
<dbReference type="SUPFAM" id="SSF49764">
    <property type="entry name" value="HSP20-like chaperones"/>
    <property type="match status" value="1"/>
</dbReference>
<dbReference type="PROSITE" id="PS01031">
    <property type="entry name" value="SHSP"/>
    <property type="match status" value="1"/>
</dbReference>
<gene>
    <name type="primary">hsp-16.48</name>
    <name type="synonym">hsp16-48</name>
    <name type="synonym">hsp16-48a</name>
    <name type="ORF">T27E4.3</name>
</gene>
<gene>
    <name type="primary">hsp-16.49</name>
    <name type="synonym">hsp16-48b</name>
    <name type="synonym">hsp16-49</name>
    <name type="ORF">T27E4.9</name>
</gene>
<accession>P02513</accession>
<accession>Q27922</accession>
<reference key="1">
    <citation type="journal article" date="1985" name="Mol. Cell. Biol.">
        <title>Locus encoding a family of small heat shock genes in Caenorhabditis elegans: two genes duplicated to form a 3.8-kilobase inverted repeat.</title>
        <authorList>
            <person name="Russnak R.H."/>
            <person name="Candido E.P.M."/>
        </authorList>
    </citation>
    <scope>NUCLEOTIDE SEQUENCE [GENOMIC DNA] (HSP-16.48 AND HSP-16.49)</scope>
</reference>
<reference key="2">
    <citation type="journal article" date="1998" name="Science">
        <title>Genome sequence of the nematode C. elegans: a platform for investigating biology.</title>
        <authorList>
            <consortium name="The C. elegans sequencing consortium"/>
        </authorList>
    </citation>
    <scope>NUCLEOTIDE SEQUENCE [LARGE SCALE GENOMIC DNA] (HSP-16.48 AND HSP-16.49)</scope>
    <source>
        <strain>Bristol N2</strain>
    </source>
</reference>
<reference key="3">
    <citation type="journal article" date="1983" name="Nucleic Acids Res.">
        <title>Cloning and analysis of cDNA sequences coding for two 16 kilodalton heat shock proteins (hsps) in Caenorhabditis elegans: homology with the small hsps of Drosophila.</title>
        <authorList>
            <person name="Russnak R.H."/>
            <person name="Jones D."/>
            <person name="Candido E.P.M."/>
        </authorList>
    </citation>
    <scope>NUCLEOTIDE SEQUENCE [MRNA] OF 9-143</scope>
</reference>
<feature type="chain" id="PRO_0000125961" description="Heat shock protein Hsp-16.48/Hsp-16.49">
    <location>
        <begin position="1"/>
        <end position="143"/>
    </location>
</feature>
<feature type="domain" description="sHSP" evidence="1">
    <location>
        <begin position="35"/>
        <end position="140"/>
    </location>
</feature>
<feature type="sequence conflict" description="In Ref. 1; AAA28067." evidence="2" ref="1">
    <original>E</original>
    <variation>EQ</variation>
    <location>
        <position position="46"/>
    </location>
</feature>
<proteinExistence type="evidence at transcript level"/>
<comment type="similarity">
    <text evidence="1">Belongs to the small heat shock protein (HSP20) family.</text>
</comment>
<sequence>MLMLRSPFSDSNVLDHFLDEITGSVQFPYWRNADHNSFNFSDNIGEIVNDESKFSVQLDVSHFKPEDLKIELDGRELKIEGIQEKKSEHGYSKRSFSKMILLPEDVDLTSVKSAISNEGKLQIEAPKKTNSSRSIPINFVAKH</sequence>
<keyword id="KW-1185">Reference proteome</keyword>
<keyword id="KW-0346">Stress response</keyword>
<organism>
    <name type="scientific">Caenorhabditis elegans</name>
    <dbReference type="NCBI Taxonomy" id="6239"/>
    <lineage>
        <taxon>Eukaryota</taxon>
        <taxon>Metazoa</taxon>
        <taxon>Ecdysozoa</taxon>
        <taxon>Nematoda</taxon>
        <taxon>Chromadorea</taxon>
        <taxon>Rhabditida</taxon>
        <taxon>Rhabditina</taxon>
        <taxon>Rhabditomorpha</taxon>
        <taxon>Rhabditoidea</taxon>
        <taxon>Rhabditidae</taxon>
        <taxon>Peloderinae</taxon>
        <taxon>Caenorhabditis</taxon>
    </lineage>
</organism>
<evidence type="ECO:0000255" key="1">
    <source>
        <dbReference type="PROSITE-ProRule" id="PRU00285"/>
    </source>
</evidence>
<evidence type="ECO:0000305" key="2"/>
<protein>
    <recommendedName>
        <fullName>Heat shock protein Hsp-16.48/Hsp-16.49</fullName>
    </recommendedName>
</protein>